<dbReference type="EMBL" id="CP000853">
    <property type="protein sequence ID" value="ABW19059.1"/>
    <property type="molecule type" value="Genomic_DNA"/>
</dbReference>
<dbReference type="RefSeq" id="WP_012159371.1">
    <property type="nucleotide sequence ID" value="NC_009922.1"/>
</dbReference>
<dbReference type="SMR" id="A8MHH2"/>
<dbReference type="STRING" id="350688.Clos_1516"/>
<dbReference type="KEGG" id="aoe:Clos_1516"/>
<dbReference type="eggNOG" id="COG0233">
    <property type="taxonomic scope" value="Bacteria"/>
</dbReference>
<dbReference type="HOGENOM" id="CLU_073981_2_0_9"/>
<dbReference type="OrthoDB" id="9804006at2"/>
<dbReference type="Proteomes" id="UP000000269">
    <property type="component" value="Chromosome"/>
</dbReference>
<dbReference type="GO" id="GO:0005737">
    <property type="term" value="C:cytoplasm"/>
    <property type="evidence" value="ECO:0007669"/>
    <property type="project" value="UniProtKB-SubCell"/>
</dbReference>
<dbReference type="GO" id="GO:0043023">
    <property type="term" value="F:ribosomal large subunit binding"/>
    <property type="evidence" value="ECO:0007669"/>
    <property type="project" value="TreeGrafter"/>
</dbReference>
<dbReference type="GO" id="GO:0006415">
    <property type="term" value="P:translational termination"/>
    <property type="evidence" value="ECO:0007669"/>
    <property type="project" value="UniProtKB-UniRule"/>
</dbReference>
<dbReference type="CDD" id="cd00520">
    <property type="entry name" value="RRF"/>
    <property type="match status" value="1"/>
</dbReference>
<dbReference type="FunFam" id="1.10.132.20:FF:000001">
    <property type="entry name" value="Ribosome-recycling factor"/>
    <property type="match status" value="1"/>
</dbReference>
<dbReference type="FunFam" id="3.30.1360.40:FF:000001">
    <property type="entry name" value="Ribosome-recycling factor"/>
    <property type="match status" value="1"/>
</dbReference>
<dbReference type="Gene3D" id="3.30.1360.40">
    <property type="match status" value="1"/>
</dbReference>
<dbReference type="Gene3D" id="1.10.132.20">
    <property type="entry name" value="Ribosome-recycling factor"/>
    <property type="match status" value="1"/>
</dbReference>
<dbReference type="HAMAP" id="MF_00040">
    <property type="entry name" value="RRF"/>
    <property type="match status" value="1"/>
</dbReference>
<dbReference type="InterPro" id="IPR002661">
    <property type="entry name" value="Ribosome_recyc_fac"/>
</dbReference>
<dbReference type="InterPro" id="IPR023584">
    <property type="entry name" value="Ribosome_recyc_fac_dom"/>
</dbReference>
<dbReference type="InterPro" id="IPR036191">
    <property type="entry name" value="RRF_sf"/>
</dbReference>
<dbReference type="NCBIfam" id="TIGR00496">
    <property type="entry name" value="frr"/>
    <property type="match status" value="1"/>
</dbReference>
<dbReference type="PANTHER" id="PTHR20982:SF3">
    <property type="entry name" value="MITOCHONDRIAL RIBOSOME RECYCLING FACTOR PSEUDO 1"/>
    <property type="match status" value="1"/>
</dbReference>
<dbReference type="PANTHER" id="PTHR20982">
    <property type="entry name" value="RIBOSOME RECYCLING FACTOR"/>
    <property type="match status" value="1"/>
</dbReference>
<dbReference type="Pfam" id="PF01765">
    <property type="entry name" value="RRF"/>
    <property type="match status" value="1"/>
</dbReference>
<dbReference type="SUPFAM" id="SSF55194">
    <property type="entry name" value="Ribosome recycling factor, RRF"/>
    <property type="match status" value="1"/>
</dbReference>
<organism>
    <name type="scientific">Alkaliphilus oremlandii (strain OhILAs)</name>
    <name type="common">Clostridium oremlandii (strain OhILAs)</name>
    <dbReference type="NCBI Taxonomy" id="350688"/>
    <lineage>
        <taxon>Bacteria</taxon>
        <taxon>Bacillati</taxon>
        <taxon>Bacillota</taxon>
        <taxon>Clostridia</taxon>
        <taxon>Peptostreptococcales</taxon>
        <taxon>Natronincolaceae</taxon>
        <taxon>Alkaliphilus</taxon>
    </lineage>
</organism>
<comment type="function">
    <text evidence="1">Responsible for the release of ribosomes from messenger RNA at the termination of protein biosynthesis. May increase the efficiency of translation by recycling ribosomes from one round of translation to another.</text>
</comment>
<comment type="subcellular location">
    <subcellularLocation>
        <location evidence="1">Cytoplasm</location>
    </subcellularLocation>
</comment>
<comment type="similarity">
    <text evidence="1">Belongs to the RRF family.</text>
</comment>
<proteinExistence type="inferred from homology"/>
<accession>A8MHH2</accession>
<keyword id="KW-0963">Cytoplasm</keyword>
<keyword id="KW-0648">Protein biosynthesis</keyword>
<keyword id="KW-1185">Reference proteome</keyword>
<sequence>MKMEIHKNLEEKMNKTINALKDELASIRAGRANPAMLDRIVVEYYGSPTPIKQIAAITAPEPRIISIQPYDGSALSSIEKAILQSDLGVNPSNDGKLIRIIVPQLTEERRKELTKVAKKTSEDAKVVLRNERRNANDRLKKMQKDNEITEDELKTAQDEVQKITDKFIKMVDELTEKKEKDIMEV</sequence>
<gene>
    <name evidence="1" type="primary">frr</name>
    <name type="ordered locus">Clos_1516</name>
</gene>
<evidence type="ECO:0000255" key="1">
    <source>
        <dbReference type="HAMAP-Rule" id="MF_00040"/>
    </source>
</evidence>
<reference key="1">
    <citation type="submission" date="2007-10" db="EMBL/GenBank/DDBJ databases">
        <title>Complete genome of Alkaliphilus oremlandii OhILAs.</title>
        <authorList>
            <person name="Copeland A."/>
            <person name="Lucas S."/>
            <person name="Lapidus A."/>
            <person name="Barry K."/>
            <person name="Detter J.C."/>
            <person name="Glavina del Rio T."/>
            <person name="Hammon N."/>
            <person name="Israni S."/>
            <person name="Dalin E."/>
            <person name="Tice H."/>
            <person name="Pitluck S."/>
            <person name="Chain P."/>
            <person name="Malfatti S."/>
            <person name="Shin M."/>
            <person name="Vergez L."/>
            <person name="Schmutz J."/>
            <person name="Larimer F."/>
            <person name="Land M."/>
            <person name="Hauser L."/>
            <person name="Kyrpides N."/>
            <person name="Mikhailova N."/>
            <person name="Stolz J.F."/>
            <person name="Dawson A."/>
            <person name="Fisher E."/>
            <person name="Crable B."/>
            <person name="Perera E."/>
            <person name="Lisak J."/>
            <person name="Ranganathan M."/>
            <person name="Basu P."/>
            <person name="Richardson P."/>
        </authorList>
    </citation>
    <scope>NUCLEOTIDE SEQUENCE [LARGE SCALE GENOMIC DNA]</scope>
    <source>
        <strain>OhILAs</strain>
    </source>
</reference>
<feature type="chain" id="PRO_1000057288" description="Ribosome-recycling factor">
    <location>
        <begin position="1"/>
        <end position="185"/>
    </location>
</feature>
<name>RRF_ALKOO</name>
<protein>
    <recommendedName>
        <fullName evidence="1">Ribosome-recycling factor</fullName>
        <shortName evidence="1">RRF</shortName>
    </recommendedName>
    <alternativeName>
        <fullName evidence="1">Ribosome-releasing factor</fullName>
    </alternativeName>
</protein>